<comment type="function">
    <text>May play a role in signal transduction cascades in terminally differentiated cells.</text>
</comment>
<comment type="catalytic activity">
    <reaction>
        <text>L-seryl-[protein] + ATP = O-phospho-L-seryl-[protein] + ADP + H(+)</text>
        <dbReference type="Rhea" id="RHEA:17989"/>
        <dbReference type="Rhea" id="RHEA-COMP:9863"/>
        <dbReference type="Rhea" id="RHEA-COMP:11604"/>
        <dbReference type="ChEBI" id="CHEBI:15378"/>
        <dbReference type="ChEBI" id="CHEBI:29999"/>
        <dbReference type="ChEBI" id="CHEBI:30616"/>
        <dbReference type="ChEBI" id="CHEBI:83421"/>
        <dbReference type="ChEBI" id="CHEBI:456216"/>
        <dbReference type="EC" id="2.7.11.22"/>
    </reaction>
</comment>
<comment type="catalytic activity">
    <reaction>
        <text>L-threonyl-[protein] + ATP = O-phospho-L-threonyl-[protein] + ADP + H(+)</text>
        <dbReference type="Rhea" id="RHEA:46608"/>
        <dbReference type="Rhea" id="RHEA-COMP:11060"/>
        <dbReference type="Rhea" id="RHEA-COMP:11605"/>
        <dbReference type="ChEBI" id="CHEBI:15378"/>
        <dbReference type="ChEBI" id="CHEBI:30013"/>
        <dbReference type="ChEBI" id="CHEBI:30616"/>
        <dbReference type="ChEBI" id="CHEBI:61977"/>
        <dbReference type="ChEBI" id="CHEBI:456216"/>
        <dbReference type="EC" id="2.7.11.22"/>
    </reaction>
</comment>
<comment type="interaction">
    <interactant intactId="EBI-746238">
        <id>Q07002</id>
    </interactant>
    <interactant intactId="EBI-8466265">
        <id>Q96MA6</id>
        <label>AK8</label>
    </interactant>
    <organismsDiffer>false</organismsDiffer>
    <experiments>3</experiments>
</comment>
<comment type="interaction">
    <interactant intactId="EBI-746238">
        <id>Q07002</id>
    </interactant>
    <interactant intactId="EBI-2548012">
        <id>Q9H2G9</id>
        <label>BLZF1</label>
    </interactant>
    <organismsDiffer>false</organismsDiffer>
    <experiments>3</experiments>
</comment>
<comment type="interaction">
    <interactant intactId="EBI-746238">
        <id>Q07002</id>
    </interactant>
    <interactant intactId="EBI-11524851">
        <id>Q8NA61-2</id>
        <label>CBY2</label>
    </interactant>
    <organismsDiffer>false</organismsDiffer>
    <experiments>3</experiments>
</comment>
<comment type="interaction">
    <interactant intactId="EBI-746238">
        <id>Q07002</id>
    </interactant>
    <interactant intactId="EBI-10171570">
        <id>Q68D86</id>
        <label>CCDC102B</label>
    </interactant>
    <organismsDiffer>false</organismsDiffer>
    <experiments>3</experiments>
</comment>
<comment type="interaction">
    <interactant intactId="EBI-746238">
        <id>Q07002</id>
    </interactant>
    <interactant intactId="EBI-11977221">
        <id>Q86Z20</id>
        <label>CCDC125</label>
    </interactant>
    <organismsDiffer>false</organismsDiffer>
    <experiments>3</experiments>
</comment>
<comment type="interaction">
    <interactant intactId="EBI-746238">
        <id>Q07002</id>
    </interactant>
    <interactant intactId="EBI-347573">
        <id>A6NC98</id>
        <label>CCDC88B</label>
    </interactant>
    <organismsDiffer>false</organismsDiffer>
    <experiments>3</experiments>
</comment>
<comment type="interaction">
    <interactant intactId="EBI-746238">
        <id>Q07002</id>
    </interactant>
    <interactant intactId="EBI-375013">
        <id>P30281</id>
        <label>CCND3</label>
    </interactant>
    <organismsDiffer>false</organismsDiffer>
    <experiments>3</experiments>
</comment>
<comment type="interaction">
    <interactant intactId="EBI-746238">
        <id>Q07002</id>
    </interactant>
    <interactant intactId="EBI-748961">
        <id>O95273</id>
        <label>CCNDBP1</label>
    </interactant>
    <organismsDiffer>false</organismsDiffer>
    <experiments>3</experiments>
</comment>
<comment type="interaction">
    <interactant intactId="EBI-746238">
        <id>Q07002</id>
    </interactant>
    <interactant intactId="EBI-12010594">
        <id>O75909-2</id>
        <label>CCNK</label>
    </interactant>
    <organismsDiffer>false</organismsDiffer>
    <experiments>3</experiments>
</comment>
<comment type="interaction">
    <interactant intactId="EBI-746238">
        <id>Q07002</id>
    </interactant>
    <interactant intactId="EBI-1181367">
        <id>Q01850</id>
        <label>CDR2</label>
    </interactant>
    <organismsDiffer>false</organismsDiffer>
    <experiments>3</experiments>
</comment>
<comment type="interaction">
    <interactant intactId="EBI-746238">
        <id>Q07002</id>
    </interactant>
    <interactant intactId="EBI-742887">
        <id>Q8TAP6</id>
        <label>CEP76</label>
    </interactant>
    <organismsDiffer>false</organismsDiffer>
    <experiments>3</experiments>
</comment>
<comment type="interaction">
    <interactant intactId="EBI-746238">
        <id>Q07002</id>
    </interactant>
    <interactant intactId="EBI-12807776">
        <id>O00167-2</id>
        <label>EYA2</label>
    </interactant>
    <organismsDiffer>false</organismsDiffer>
    <experiments>3</experiments>
</comment>
<comment type="interaction">
    <interactant intactId="EBI-746238">
        <id>Q07002</id>
    </interactant>
    <interactant intactId="EBI-11958845">
        <id>O94868-3</id>
        <label>FCHSD2</label>
    </interactant>
    <organismsDiffer>false</organismsDiffer>
    <experiments>3</experiments>
</comment>
<comment type="interaction">
    <interactant intactId="EBI-746238">
        <id>Q07002</id>
    </interactant>
    <interactant intactId="EBI-5661036">
        <id>A1L4K1</id>
        <label>FSD2</label>
    </interactant>
    <organismsDiffer>false</organismsDiffer>
    <experiments>3</experiments>
</comment>
<comment type="interaction">
    <interactant intactId="EBI-746238">
        <id>Q07002</id>
    </interactant>
    <interactant intactId="EBI-11022345">
        <id>P51114-2</id>
        <label>FXR1</label>
    </interactant>
    <organismsDiffer>false</organismsDiffer>
    <experiments>3</experiments>
</comment>
<comment type="interaction">
    <interactant intactId="EBI-746238">
        <id>Q07002</id>
    </interactant>
    <interactant intactId="EBI-618309">
        <id>Q08379</id>
        <label>GOLGA2</label>
    </interactant>
    <organismsDiffer>false</organismsDiffer>
    <experiments>6</experiments>
</comment>
<comment type="interaction">
    <interactant intactId="EBI-746238">
        <id>Q07002</id>
    </interactant>
    <interactant intactId="EBI-5916454">
        <id>A6NEM1</id>
        <label>GOLGA6L9</label>
    </interactant>
    <organismsDiffer>false</organismsDiffer>
    <experiments>3</experiments>
</comment>
<comment type="interaction">
    <interactant intactId="EBI-746238">
        <id>Q07002</id>
    </interactant>
    <interactant intactId="EBI-739467">
        <id>Q9H8Y8</id>
        <label>GORASP2</label>
    </interactant>
    <organismsDiffer>false</organismsDiffer>
    <experiments>3</experiments>
</comment>
<comment type="interaction">
    <interactant intactId="EBI-746238">
        <id>Q07002</id>
    </interactant>
    <interactant intactId="EBI-712814">
        <id>P54257</id>
        <label>HAP1</label>
    </interactant>
    <organismsDiffer>false</organismsDiffer>
    <experiments>3</experiments>
</comment>
<comment type="interaction">
    <interactant intactId="EBI-746238">
        <id>Q07002</id>
    </interactant>
    <interactant intactId="EBI-2549423">
        <id>Q6NT76</id>
        <label>HMBOX1</label>
    </interactant>
    <organismsDiffer>false</organismsDiffer>
    <experiments>3</experiments>
</comment>
<comment type="interaction">
    <interactant intactId="EBI-746238">
        <id>Q07002</id>
    </interactant>
    <interactant intactId="EBI-748420">
        <id>Q9NSC5</id>
        <label>HOMER3</label>
    </interactant>
    <organismsDiffer>false</organismsDiffer>
    <experiments>3</experiments>
</comment>
<comment type="interaction">
    <interactant intactId="EBI-746238">
        <id>Q07002</id>
    </interactant>
    <interactant intactId="EBI-10961706">
        <id>Q96ED9-2</id>
        <label>HOOK2</label>
    </interactant>
    <organismsDiffer>false</organismsDiffer>
    <experiments>3</experiments>
</comment>
<comment type="interaction">
    <interactant intactId="EBI-746238">
        <id>Q07002</id>
    </interactant>
    <interactant intactId="EBI-747204">
        <id>Q9UKT9</id>
        <label>IKZF3</label>
    </interactant>
    <organismsDiffer>false</organismsDiffer>
    <experiments>3</experiments>
</comment>
<comment type="interaction">
    <interactant intactId="EBI-746238">
        <id>Q07002</id>
    </interactant>
    <interactant intactId="EBI-6509505">
        <id>Q0VD86</id>
        <label>INCA1</label>
    </interactant>
    <organismsDiffer>false</organismsDiffer>
    <experiments>3</experiments>
</comment>
<comment type="interaction">
    <interactant intactId="EBI-746238">
        <id>Q07002</id>
    </interactant>
    <interactant intactId="EBI-2556193">
        <id>Q63ZY3</id>
        <label>KANK2</label>
    </interactant>
    <organismsDiffer>false</organismsDiffer>
    <experiments>3</experiments>
</comment>
<comment type="interaction">
    <interactant intactId="EBI-746238">
        <id>Q07002</id>
    </interactant>
    <interactant intactId="EBI-2125614">
        <id>Q9BVG8</id>
        <label>KIFC3</label>
    </interactant>
    <organismsDiffer>false</organismsDiffer>
    <experiments>3</experiments>
</comment>
<comment type="interaction">
    <interactant intactId="EBI-746238">
        <id>Q07002</id>
    </interactant>
    <interactant intactId="EBI-739566">
        <id>P19012</id>
        <label>KRT15</label>
    </interactant>
    <organismsDiffer>false</organismsDiffer>
    <experiments>3</experiments>
</comment>
<comment type="interaction">
    <interactant intactId="EBI-746238">
        <id>Q07002</id>
    </interactant>
    <interactant intactId="EBI-356410">
        <id>P08779</id>
        <label>KRT16</label>
    </interactant>
    <organismsDiffer>false</organismsDiffer>
    <experiments>3</experiments>
</comment>
<comment type="interaction">
    <interactant intactId="EBI-746238">
        <id>Q07002</id>
    </interactant>
    <interactant intactId="EBI-948001">
        <id>Q15323</id>
        <label>KRT31</label>
    </interactant>
    <organismsDiffer>false</organismsDiffer>
    <experiments>6</experiments>
</comment>
<comment type="interaction">
    <interactant intactId="EBI-746238">
        <id>Q07002</id>
    </interactant>
    <interactant intactId="EBI-1047093">
        <id>O76011</id>
        <label>KRT34</label>
    </interactant>
    <organismsDiffer>false</organismsDiffer>
    <experiments>3</experiments>
</comment>
<comment type="interaction">
    <interactant intactId="EBI-746238">
        <id>Q07002</id>
    </interactant>
    <interactant intactId="EBI-10171697">
        <id>Q6A162</id>
        <label>KRT40</label>
    </interactant>
    <organismsDiffer>false</organismsDiffer>
    <experiments>3</experiments>
</comment>
<comment type="interaction">
    <interactant intactId="EBI-746238">
        <id>Q07002</id>
    </interactant>
    <interactant intactId="EBI-2949715">
        <id>O95678</id>
        <label>KRT75</label>
    </interactant>
    <organismsDiffer>false</organismsDiffer>
    <experiments>3</experiments>
</comment>
<comment type="interaction">
    <interactant intactId="EBI-746238">
        <id>Q07002</id>
    </interactant>
    <interactant intactId="EBI-9996498">
        <id>O43790</id>
        <label>KRT86</label>
    </interactant>
    <organismsDiffer>false</organismsDiffer>
    <experiments>3</experiments>
</comment>
<comment type="interaction">
    <interactant intactId="EBI-746238">
        <id>Q07002</id>
    </interactant>
    <interactant intactId="EBI-741037">
        <id>Q9BRK4</id>
        <label>LZTS2</label>
    </interactant>
    <organismsDiffer>false</organismsDiffer>
    <experiments>3</experiments>
</comment>
<comment type="interaction">
    <interactant intactId="EBI-746238">
        <id>Q07002</id>
    </interactant>
    <interactant intactId="EBI-742610">
        <id>Q9Y6D9</id>
        <label>MAD1L1</label>
    </interactant>
    <organismsDiffer>false</organismsDiffer>
    <experiments>3</experiments>
</comment>
<comment type="interaction">
    <interactant intactId="EBI-746238">
        <id>Q07002</id>
    </interactant>
    <interactant intactId="EBI-10172526">
        <id>Q9UJV3-2</id>
        <label>MID2</label>
    </interactant>
    <organismsDiffer>false</organismsDiffer>
    <experiments>3</experiments>
</comment>
<comment type="interaction">
    <interactant intactId="EBI-746238">
        <id>Q07002</id>
    </interactant>
    <interactant intactId="EBI-2548751">
        <id>Q8TD10</id>
        <label>MIPOL1</label>
    </interactant>
    <organismsDiffer>false</organismsDiffer>
    <experiments>3</experiments>
</comment>
<comment type="interaction">
    <interactant intactId="EBI-746238">
        <id>Q07002</id>
    </interactant>
    <interactant intactId="EBI-742948">
        <id>Q5JR59</id>
        <label>MTUS2</label>
    </interactant>
    <organismsDiffer>false</organismsDiffer>
    <experiments>3</experiments>
</comment>
<comment type="interaction">
    <interactant intactId="EBI-746238">
        <id>Q07002</id>
    </interactant>
    <interactant intactId="EBI-11522433">
        <id>Q5JR59-3</id>
        <label>MTUS2</label>
    </interactant>
    <organismsDiffer>false</organismsDiffer>
    <experiments>3</experiments>
</comment>
<comment type="interaction">
    <interactant intactId="EBI-746238">
        <id>Q07002</id>
    </interactant>
    <interactant intactId="EBI-14066006">
        <id>Q4G0R1</id>
        <label>PIBF1</label>
    </interactant>
    <organismsDiffer>false</organismsDiffer>
    <experiments>3</experiments>
</comment>
<comment type="interaction">
    <interactant intactId="EBI-746238">
        <id>Q07002</id>
    </interactant>
    <interactant intactId="EBI-302345">
        <id>Q8ND90</id>
        <label>PNMA1</label>
    </interactant>
    <organismsDiffer>false</organismsDiffer>
    <experiments>3</experiments>
</comment>
<comment type="interaction">
    <interactant intactId="EBI-746238">
        <id>Q07002</id>
    </interactant>
    <interactant intactId="EBI-745426">
        <id>Q13136</id>
        <label>PPFIA1</label>
    </interactant>
    <organismsDiffer>false</organismsDiffer>
    <experiments>3</experiments>
</comment>
<comment type="interaction">
    <interactant intactId="EBI-746238">
        <id>Q07002</id>
    </interactant>
    <interactant intactId="EBI-447043">
        <id>Q15276</id>
        <label>RABEP1</label>
    </interactant>
    <organismsDiffer>false</organismsDiffer>
    <experiments>3</experiments>
</comment>
<comment type="interaction">
    <interactant intactId="EBI-746238">
        <id>Q07002</id>
    </interactant>
    <interactant intactId="EBI-10829018">
        <id>Q04864-2</id>
        <label>REL</label>
    </interactant>
    <organismsDiffer>false</organismsDiffer>
    <experiments>3</experiments>
</comment>
<comment type="interaction">
    <interactant intactId="EBI-746238">
        <id>Q07002</id>
    </interactant>
    <interactant intactId="EBI-359224">
        <id>Q13077</id>
        <label>TRAF1</label>
    </interactant>
    <organismsDiffer>false</organismsDiffer>
    <experiments>3</experiments>
</comment>
<comment type="interaction">
    <interactant intactId="EBI-746238">
        <id>Q07002</id>
    </interactant>
    <interactant intactId="EBI-355744">
        <id>Q12933</id>
        <label>TRAF2</label>
    </interactant>
    <organismsDiffer>false</organismsDiffer>
    <experiments>3</experiments>
</comment>
<comment type="interaction">
    <interactant intactId="EBI-746238">
        <id>Q07002</id>
    </interactant>
    <interactant intactId="EBI-719493">
        <id>P14373</id>
        <label>TRIM27</label>
    </interactant>
    <organismsDiffer>false</organismsDiffer>
    <experiments>3</experiments>
</comment>
<comment type="interaction">
    <interactant intactId="EBI-746238">
        <id>Q07002</id>
    </interactant>
    <interactant intactId="EBI-9867283">
        <id>Q86XT4</id>
        <label>TRIM50</label>
    </interactant>
    <organismsDiffer>false</organismsDiffer>
    <experiments>3</experiments>
</comment>
<comment type="interaction">
    <interactant intactId="EBI-746238">
        <id>Q07002</id>
    </interactant>
    <interactant intactId="EBI-2130429">
        <id>Q9BYV2</id>
        <label>TRIM54</label>
    </interactant>
    <organismsDiffer>false</organismsDiffer>
    <experiments>3</experiments>
</comment>
<comment type="interaction">
    <interactant intactId="EBI-746238">
        <id>Q07002</id>
    </interactant>
    <interactant intactId="EBI-744794">
        <id>Q9BZW7</id>
        <label>TSGA10</label>
    </interactant>
    <organismsDiffer>false</organismsDiffer>
    <experiments>3</experiments>
</comment>
<comment type="interaction">
    <interactant intactId="EBI-746238">
        <id>Q07002</id>
    </interactant>
    <interactant intactId="EBI-9090990">
        <id>Q5W5X9-3</id>
        <label>TTC23</label>
    </interactant>
    <organismsDiffer>false</organismsDiffer>
    <experiments>3</experiments>
</comment>
<comment type="interaction">
    <interactant intactId="EBI-746238">
        <id>Q07002</id>
    </interactant>
    <interactant intactId="EBI-12146727">
        <id>Q9UK41-2</id>
        <label>VPS28</label>
    </interactant>
    <organismsDiffer>false</organismsDiffer>
    <experiments>3</experiments>
</comment>
<comment type="interaction">
    <interactant intactId="EBI-746238">
        <id>Q07002</id>
    </interactant>
    <interactant intactId="EBI-2799833">
        <id>Q8N1B4</id>
        <label>VPS52</label>
    </interactant>
    <organismsDiffer>false</organismsDiffer>
    <experiments>3</experiments>
</comment>
<comment type="interaction">
    <interactant intactId="EBI-746238">
        <id>Q07002</id>
    </interactant>
    <interactant intactId="EBI-356498">
        <id>P62258</id>
        <label>YWHAE</label>
    </interactant>
    <organismsDiffer>false</organismsDiffer>
    <experiments>4</experiments>
</comment>
<comment type="interaction">
    <interactant intactId="EBI-746238">
        <id>Q07002</id>
    </interactant>
    <interactant intactId="EBI-347088">
        <id>P63104</id>
        <label>YWHAZ</label>
    </interactant>
    <organismsDiffer>false</organismsDiffer>
    <experiments>5</experiments>
</comment>
<comment type="interaction">
    <interactant intactId="EBI-746238">
        <id>Q07002</id>
    </interactant>
    <interactant intactId="EBI-743265">
        <id>Q9BUY5</id>
        <label>ZNF426</label>
    </interactant>
    <organismsDiffer>false</organismsDiffer>
    <experiments>3</experiments>
</comment>
<comment type="interaction">
    <interactant intactId="EBI-746238">
        <id>Q07002</id>
    </interactant>
    <interactant intactId="EBI-11962468">
        <id>Q7Z4V0</id>
        <label>ZNF438</label>
    </interactant>
    <organismsDiffer>false</organismsDiffer>
    <experiments>3</experiments>
</comment>
<comment type="interaction">
    <interactant intactId="EBI-746238">
        <id>Q07002</id>
    </interactant>
    <interactant intactId="EBI-10251462">
        <id>Q6NX45</id>
        <label>ZNF774</label>
    </interactant>
    <organismsDiffer>false</organismsDiffer>
    <experiments>3</experiments>
</comment>
<comment type="interaction">
    <interactant intactId="EBI-746238">
        <id>Q07002</id>
    </interactant>
    <interactant intactId="EBI-527853">
        <id>Q9UGI0</id>
        <label>ZRANB1</label>
    </interactant>
    <organismsDiffer>false</organismsDiffer>
    <experiments>3</experiments>
</comment>
<comment type="alternative products">
    <event type="alternative splicing"/>
    <isoform>
        <id>Q07002-2</id>
        <name>1</name>
        <name evidence="9">3a</name>
        <sequence type="displayed"/>
    </isoform>
    <isoform>
        <id>Q07002-3</id>
        <name>2</name>
        <name evidence="9">3b</name>
        <sequence type="described" ref="VSP_035889"/>
    </isoform>
</comment>
<comment type="tissue specificity">
    <text evidence="5">Isoform 2 expression is limited to several subcortical nuclei of the basal gangli and the spinal cord. Isoform 1 is widely expressed.</text>
</comment>
<comment type="similarity">
    <text evidence="10">Belongs to the protein kinase superfamily. CMGC Ser/Thr protein kinase family. CDC2/CDKX subfamily.</text>
</comment>
<gene>
    <name type="primary">CDK18</name>
    <name type="synonym">PCTAIRE3</name>
    <name type="synonym">PCTK3</name>
</gene>
<reference key="1">
    <citation type="journal article" date="2004" name="Gene">
        <title>Cloning and expression analysis of two novel PCTAIRE 3 transcripts from human brain.</title>
        <authorList>
            <person name="Herskovits A.Z."/>
            <person name="Davies P."/>
        </authorList>
    </citation>
    <scope>NUCLEOTIDE SEQUENCE [MRNA] (ISOFORMS 1 AND 2)</scope>
    <scope>TISSUE SPECIFICITY</scope>
    <source>
        <tissue>Hippocampus</tissue>
    </source>
</reference>
<reference key="2">
    <citation type="submission" date="2003-05" db="EMBL/GenBank/DDBJ databases">
        <title>Cloning of human full-length CDSs in BD Creator(TM) system donor vector.</title>
        <authorList>
            <person name="Kalnine N."/>
            <person name="Chen X."/>
            <person name="Rolfs A."/>
            <person name="Halleck A."/>
            <person name="Hines L."/>
            <person name="Eisenstein S."/>
            <person name="Koundinya M."/>
            <person name="Raphael J."/>
            <person name="Moreira D."/>
            <person name="Kelley T."/>
            <person name="LaBaer J."/>
            <person name="Lin Y."/>
            <person name="Phelan M."/>
            <person name="Farmer A."/>
        </authorList>
    </citation>
    <scope>NUCLEOTIDE SEQUENCE [LARGE SCALE MRNA] (ISOFORM 1)</scope>
    <scope>VARIANT MET-166</scope>
</reference>
<reference key="3">
    <citation type="journal article" date="2006" name="Nature">
        <title>The DNA sequence and biological annotation of human chromosome 1.</title>
        <authorList>
            <person name="Gregory S.G."/>
            <person name="Barlow K.F."/>
            <person name="McLay K.E."/>
            <person name="Kaul R."/>
            <person name="Swarbreck D."/>
            <person name="Dunham A."/>
            <person name="Scott C.E."/>
            <person name="Howe K.L."/>
            <person name="Woodfine K."/>
            <person name="Spencer C.C.A."/>
            <person name="Jones M.C."/>
            <person name="Gillson C."/>
            <person name="Searle S."/>
            <person name="Zhou Y."/>
            <person name="Kokocinski F."/>
            <person name="McDonald L."/>
            <person name="Evans R."/>
            <person name="Phillips K."/>
            <person name="Atkinson A."/>
            <person name="Cooper R."/>
            <person name="Jones C."/>
            <person name="Hall R.E."/>
            <person name="Andrews T.D."/>
            <person name="Lloyd C."/>
            <person name="Ainscough R."/>
            <person name="Almeida J.P."/>
            <person name="Ambrose K.D."/>
            <person name="Anderson F."/>
            <person name="Andrew R.W."/>
            <person name="Ashwell R.I.S."/>
            <person name="Aubin K."/>
            <person name="Babbage A.K."/>
            <person name="Bagguley C.L."/>
            <person name="Bailey J."/>
            <person name="Beasley H."/>
            <person name="Bethel G."/>
            <person name="Bird C.P."/>
            <person name="Bray-Allen S."/>
            <person name="Brown J.Y."/>
            <person name="Brown A.J."/>
            <person name="Buckley D."/>
            <person name="Burton J."/>
            <person name="Bye J."/>
            <person name="Carder C."/>
            <person name="Chapman J.C."/>
            <person name="Clark S.Y."/>
            <person name="Clarke G."/>
            <person name="Clee C."/>
            <person name="Cobley V."/>
            <person name="Collier R.E."/>
            <person name="Corby N."/>
            <person name="Coville G.J."/>
            <person name="Davies J."/>
            <person name="Deadman R."/>
            <person name="Dunn M."/>
            <person name="Earthrowl M."/>
            <person name="Ellington A.G."/>
            <person name="Errington H."/>
            <person name="Frankish A."/>
            <person name="Frankland J."/>
            <person name="French L."/>
            <person name="Garner P."/>
            <person name="Garnett J."/>
            <person name="Gay L."/>
            <person name="Ghori M.R.J."/>
            <person name="Gibson R."/>
            <person name="Gilby L.M."/>
            <person name="Gillett W."/>
            <person name="Glithero R.J."/>
            <person name="Grafham D.V."/>
            <person name="Griffiths C."/>
            <person name="Griffiths-Jones S."/>
            <person name="Grocock R."/>
            <person name="Hammond S."/>
            <person name="Harrison E.S.I."/>
            <person name="Hart E."/>
            <person name="Haugen E."/>
            <person name="Heath P.D."/>
            <person name="Holmes S."/>
            <person name="Holt K."/>
            <person name="Howden P.J."/>
            <person name="Hunt A.R."/>
            <person name="Hunt S.E."/>
            <person name="Hunter G."/>
            <person name="Isherwood J."/>
            <person name="James R."/>
            <person name="Johnson C."/>
            <person name="Johnson D."/>
            <person name="Joy A."/>
            <person name="Kay M."/>
            <person name="Kershaw J.K."/>
            <person name="Kibukawa M."/>
            <person name="Kimberley A.M."/>
            <person name="King A."/>
            <person name="Knights A.J."/>
            <person name="Lad H."/>
            <person name="Laird G."/>
            <person name="Lawlor S."/>
            <person name="Leongamornlert D.A."/>
            <person name="Lloyd D.M."/>
            <person name="Loveland J."/>
            <person name="Lovell J."/>
            <person name="Lush M.J."/>
            <person name="Lyne R."/>
            <person name="Martin S."/>
            <person name="Mashreghi-Mohammadi M."/>
            <person name="Matthews L."/>
            <person name="Matthews N.S.W."/>
            <person name="McLaren S."/>
            <person name="Milne S."/>
            <person name="Mistry S."/>
            <person name="Moore M.J.F."/>
            <person name="Nickerson T."/>
            <person name="O'Dell C.N."/>
            <person name="Oliver K."/>
            <person name="Palmeiri A."/>
            <person name="Palmer S.A."/>
            <person name="Parker A."/>
            <person name="Patel D."/>
            <person name="Pearce A.V."/>
            <person name="Peck A.I."/>
            <person name="Pelan S."/>
            <person name="Phelps K."/>
            <person name="Phillimore B.J."/>
            <person name="Plumb R."/>
            <person name="Rajan J."/>
            <person name="Raymond C."/>
            <person name="Rouse G."/>
            <person name="Saenphimmachak C."/>
            <person name="Sehra H.K."/>
            <person name="Sheridan E."/>
            <person name="Shownkeen R."/>
            <person name="Sims S."/>
            <person name="Skuce C.D."/>
            <person name="Smith M."/>
            <person name="Steward C."/>
            <person name="Subramanian S."/>
            <person name="Sycamore N."/>
            <person name="Tracey A."/>
            <person name="Tromans A."/>
            <person name="Van Helmond Z."/>
            <person name="Wall M."/>
            <person name="Wallis J.M."/>
            <person name="White S."/>
            <person name="Whitehead S.L."/>
            <person name="Wilkinson J.E."/>
            <person name="Willey D.L."/>
            <person name="Williams H."/>
            <person name="Wilming L."/>
            <person name="Wray P.W."/>
            <person name="Wu Z."/>
            <person name="Coulson A."/>
            <person name="Vaudin M."/>
            <person name="Sulston J.E."/>
            <person name="Durbin R.M."/>
            <person name="Hubbard T."/>
            <person name="Wooster R."/>
            <person name="Dunham I."/>
            <person name="Carter N.P."/>
            <person name="McVean G."/>
            <person name="Ross M.T."/>
            <person name="Harrow J."/>
            <person name="Olson M.V."/>
            <person name="Beck S."/>
            <person name="Rogers J."/>
            <person name="Bentley D.R."/>
        </authorList>
    </citation>
    <scope>NUCLEOTIDE SEQUENCE [LARGE SCALE GENOMIC DNA]</scope>
</reference>
<reference key="4">
    <citation type="submission" date="2005-07" db="EMBL/GenBank/DDBJ databases">
        <authorList>
            <person name="Mural R.J."/>
            <person name="Istrail S."/>
            <person name="Sutton G.G."/>
            <person name="Florea L."/>
            <person name="Halpern A.L."/>
            <person name="Mobarry C.M."/>
            <person name="Lippert R."/>
            <person name="Walenz B."/>
            <person name="Shatkay H."/>
            <person name="Dew I."/>
            <person name="Miller J.R."/>
            <person name="Flanigan M.J."/>
            <person name="Edwards N.J."/>
            <person name="Bolanos R."/>
            <person name="Fasulo D."/>
            <person name="Halldorsson B.V."/>
            <person name="Hannenhalli S."/>
            <person name="Turner R."/>
            <person name="Yooseph S."/>
            <person name="Lu F."/>
            <person name="Nusskern D.R."/>
            <person name="Shue B.C."/>
            <person name="Zheng X.H."/>
            <person name="Zhong F."/>
            <person name="Delcher A.L."/>
            <person name="Huson D.H."/>
            <person name="Kravitz S.A."/>
            <person name="Mouchard L."/>
            <person name="Reinert K."/>
            <person name="Remington K.A."/>
            <person name="Clark A.G."/>
            <person name="Waterman M.S."/>
            <person name="Eichler E.E."/>
            <person name="Adams M.D."/>
            <person name="Hunkapiller M.W."/>
            <person name="Myers E.W."/>
            <person name="Venter J.C."/>
        </authorList>
    </citation>
    <scope>NUCLEOTIDE SEQUENCE [LARGE SCALE GENOMIC DNA]</scope>
</reference>
<reference key="5">
    <citation type="journal article" date="2004" name="Genome Res.">
        <title>The status, quality, and expansion of the NIH full-length cDNA project: the Mammalian Gene Collection (MGC).</title>
        <authorList>
            <consortium name="The MGC Project Team"/>
        </authorList>
    </citation>
    <scope>NUCLEOTIDE SEQUENCE [LARGE SCALE MRNA] OF 3-474 (ISOFORM 1)</scope>
    <scope>VARIANT MET-166</scope>
    <source>
        <tissue>Colon</tissue>
    </source>
</reference>
<reference key="6">
    <citation type="journal article" date="1992" name="EMBO J.">
        <title>A family of human cdc2-related protein kinases.</title>
        <authorList>
            <person name="Meyerson M."/>
            <person name="Enders G.H."/>
            <person name="Wu C.-L."/>
            <person name="Su L.-K."/>
            <person name="Gorka C."/>
            <person name="Nelson C."/>
            <person name="Harlow E."/>
            <person name="Tsai L.-H."/>
        </authorList>
    </citation>
    <scope>NUCLEOTIDE SEQUENCE [MRNA] OF 95-474</scope>
</reference>
<reference key="7">
    <citation type="journal article" date="2008" name="Mol. Cell">
        <title>Kinase-selective enrichment enables quantitative phosphoproteomics of the kinome across the cell cycle.</title>
        <authorList>
            <person name="Daub H."/>
            <person name="Olsen J.V."/>
            <person name="Bairlein M."/>
            <person name="Gnad F."/>
            <person name="Oppermann F.S."/>
            <person name="Korner R."/>
            <person name="Greff Z."/>
            <person name="Keri G."/>
            <person name="Stemmann O."/>
            <person name="Mann M."/>
        </authorList>
    </citation>
    <scope>PHOSPHORYLATION [LARGE SCALE ANALYSIS] AT SER-74; SER-89 AND SER-117</scope>
    <scope>IDENTIFICATION BY MASS SPECTROMETRY [LARGE SCALE ANALYSIS]</scope>
    <source>
        <tissue>Cervix carcinoma</tissue>
    </source>
</reference>
<reference key="8">
    <citation type="journal article" date="2008" name="Proc. Natl. Acad. Sci. U.S.A.">
        <title>A quantitative atlas of mitotic phosphorylation.</title>
        <authorList>
            <person name="Dephoure N."/>
            <person name="Zhou C."/>
            <person name="Villen J."/>
            <person name="Beausoleil S.A."/>
            <person name="Bakalarski C.E."/>
            <person name="Elledge S.J."/>
            <person name="Gygi S.P."/>
        </authorList>
    </citation>
    <scope>PHOSPHORYLATION [LARGE SCALE ANALYSIS] AT SER-14; SER-89 AND SER-132</scope>
    <scope>IDENTIFICATION BY MASS SPECTROMETRY [LARGE SCALE ANALYSIS]</scope>
    <source>
        <tissue>Cervix carcinoma</tissue>
    </source>
</reference>
<reference key="9">
    <citation type="journal article" date="2009" name="Mol. Cell. Proteomics">
        <title>Large-scale proteomics analysis of the human kinome.</title>
        <authorList>
            <person name="Oppermann F.S."/>
            <person name="Gnad F."/>
            <person name="Olsen J.V."/>
            <person name="Hornberger R."/>
            <person name="Greff Z."/>
            <person name="Keri G."/>
            <person name="Mann M."/>
            <person name="Daub H."/>
        </authorList>
    </citation>
    <scope>PHOSPHORYLATION [LARGE SCALE ANALYSIS] AT SER-74; SER-89; SER-98 AND SER-117</scope>
    <scope>IDENTIFICATION BY MASS SPECTROMETRY [LARGE SCALE ANALYSIS]</scope>
</reference>
<reference key="10">
    <citation type="journal article" date="2011" name="Sci. Signal.">
        <title>System-wide temporal characterization of the proteome and phosphoproteome of human embryonic stem cell differentiation.</title>
        <authorList>
            <person name="Rigbolt K.T."/>
            <person name="Prokhorova T.A."/>
            <person name="Akimov V."/>
            <person name="Henningsen J."/>
            <person name="Johansen P.T."/>
            <person name="Kratchmarova I."/>
            <person name="Kassem M."/>
            <person name="Mann M."/>
            <person name="Olsen J.V."/>
            <person name="Blagoev B."/>
        </authorList>
    </citation>
    <scope>PHOSPHORYLATION [LARGE SCALE ANALYSIS] AT SER-132</scope>
    <scope>IDENTIFICATION BY MASS SPECTROMETRY [LARGE SCALE ANALYSIS]</scope>
</reference>
<reference key="11">
    <citation type="journal article" date="2013" name="J. Proteome Res.">
        <title>Toward a comprehensive characterization of a human cancer cell phosphoproteome.</title>
        <authorList>
            <person name="Zhou H."/>
            <person name="Di Palma S."/>
            <person name="Preisinger C."/>
            <person name="Peng M."/>
            <person name="Polat A.N."/>
            <person name="Heck A.J."/>
            <person name="Mohammed S."/>
        </authorList>
    </citation>
    <scope>PHOSPHORYLATION [LARGE SCALE ANALYSIS] AT SER-132</scope>
    <scope>IDENTIFICATION BY MASS SPECTROMETRY [LARGE SCALE ANALYSIS]</scope>
    <source>
        <tissue>Cervix carcinoma</tissue>
    </source>
</reference>
<reference key="12">
    <citation type="journal article" date="2014" name="J. Proteomics">
        <title>An enzyme assisted RP-RPLC approach for in-depth analysis of human liver phosphoproteome.</title>
        <authorList>
            <person name="Bian Y."/>
            <person name="Song C."/>
            <person name="Cheng K."/>
            <person name="Dong M."/>
            <person name="Wang F."/>
            <person name="Huang J."/>
            <person name="Sun D."/>
            <person name="Wang L."/>
            <person name="Ye M."/>
            <person name="Zou H."/>
        </authorList>
    </citation>
    <scope>PHOSPHORYLATION [LARGE SCALE ANALYSIS] AT SER-89</scope>
    <scope>IDENTIFICATION BY MASS SPECTROMETRY [LARGE SCALE ANALYSIS]</scope>
    <source>
        <tissue>Liver</tissue>
    </source>
</reference>
<reference key="13">
    <citation type="journal article" date="2007" name="Nature">
        <title>Patterns of somatic mutation in human cancer genomes.</title>
        <authorList>
            <person name="Greenman C."/>
            <person name="Stephens P."/>
            <person name="Smith R."/>
            <person name="Dalgliesh G.L."/>
            <person name="Hunter C."/>
            <person name="Bignell G."/>
            <person name="Davies H."/>
            <person name="Teague J."/>
            <person name="Butler A."/>
            <person name="Stevens C."/>
            <person name="Edkins S."/>
            <person name="O'Meara S."/>
            <person name="Vastrik I."/>
            <person name="Schmidt E.E."/>
            <person name="Avis T."/>
            <person name="Barthorpe S."/>
            <person name="Bhamra G."/>
            <person name="Buck G."/>
            <person name="Choudhury B."/>
            <person name="Clements J."/>
            <person name="Cole J."/>
            <person name="Dicks E."/>
            <person name="Forbes S."/>
            <person name="Gray K."/>
            <person name="Halliday K."/>
            <person name="Harrison R."/>
            <person name="Hills K."/>
            <person name="Hinton J."/>
            <person name="Jenkinson A."/>
            <person name="Jones D."/>
            <person name="Menzies A."/>
            <person name="Mironenko T."/>
            <person name="Perry J."/>
            <person name="Raine K."/>
            <person name="Richardson D."/>
            <person name="Shepherd R."/>
            <person name="Small A."/>
            <person name="Tofts C."/>
            <person name="Varian J."/>
            <person name="Webb T."/>
            <person name="West S."/>
            <person name="Widaa S."/>
            <person name="Yates A."/>
            <person name="Cahill D.P."/>
            <person name="Louis D.N."/>
            <person name="Goldstraw P."/>
            <person name="Nicholson A.G."/>
            <person name="Brasseur F."/>
            <person name="Looijenga L."/>
            <person name="Weber B.L."/>
            <person name="Chiew Y.-E."/>
            <person name="DeFazio A."/>
            <person name="Greaves M.F."/>
            <person name="Green A.R."/>
            <person name="Campbell P."/>
            <person name="Birney E."/>
            <person name="Easton D.F."/>
            <person name="Chenevix-Trench G."/>
            <person name="Tan M.-H."/>
            <person name="Khoo S.K."/>
            <person name="Teh B.T."/>
            <person name="Yuen S.T."/>
            <person name="Leung S.Y."/>
            <person name="Wooster R."/>
            <person name="Futreal P.A."/>
            <person name="Stratton M.R."/>
        </authorList>
    </citation>
    <scope>VARIANTS [LARGE SCALE ANALYSIS] SER-48; ARG-67 AND MET-166</scope>
</reference>
<evidence type="ECO:0000250" key="1">
    <source>
        <dbReference type="UniProtKB" id="O35832"/>
    </source>
</evidence>
<evidence type="ECO:0000255" key="2">
    <source>
        <dbReference type="PROSITE-ProRule" id="PRU00159"/>
    </source>
</evidence>
<evidence type="ECO:0000255" key="3">
    <source>
        <dbReference type="PROSITE-ProRule" id="PRU10027"/>
    </source>
</evidence>
<evidence type="ECO:0000256" key="4">
    <source>
        <dbReference type="SAM" id="MobiDB-lite"/>
    </source>
</evidence>
<evidence type="ECO:0000269" key="5">
    <source>
    </source>
</evidence>
<evidence type="ECO:0000269" key="6">
    <source>
    </source>
</evidence>
<evidence type="ECO:0000269" key="7">
    <source>
    </source>
</evidence>
<evidence type="ECO:0000269" key="8">
    <source ref="2"/>
</evidence>
<evidence type="ECO:0000303" key="9">
    <source>
    </source>
</evidence>
<evidence type="ECO:0000305" key="10"/>
<evidence type="ECO:0007744" key="11">
    <source>
    </source>
</evidence>
<evidence type="ECO:0007744" key="12">
    <source>
    </source>
</evidence>
<evidence type="ECO:0007744" key="13">
    <source>
    </source>
</evidence>
<evidence type="ECO:0007744" key="14">
    <source>
    </source>
</evidence>
<evidence type="ECO:0007744" key="15">
    <source>
    </source>
</evidence>
<evidence type="ECO:0007744" key="16">
    <source>
    </source>
</evidence>
<sequence>MIMNKMKNFKRRFSLSVPRTETIEESLAEFTEQFNQLHNRRNENLQLGPLGRDPPQECSTFSPTDSGEEPGQLSPGVQFQRRQNQRRFSMEDVSKRLSLPMDIRLPQEFLQKLQMESPDLPKPLSRMSRRASLSDIGFGKLETYVKLDKLGEGTYATVFKGRSKLTENLVALKEIRLEHEEGAPCTAIREVSLLKNLKHANIVTLHDLIHTDRSLTLVFEYLDSDLKQYLDHCGNLMSMHNVKIFMFQLLRGLAYCHHRKILHRDLKPQNLLINERGELKLADFGLARAKSVPTKTYSNEVVTLWYRPPDVLLGSTEYSTPIDMWGVGCIHYEMATGRPLFPGSTVKEELHLIFRLLGTPTEETWPGVTAFSEFRTYSFPCYLPQPLINHAPRLDTDGIHLLSSLLLYESKSRMSAEAALSHSYFRSLGERVHQLEDTASIFSLKEIQLQKDPGYRGLAFQQPGRGKNRRQSIF</sequence>
<name>CDK18_HUMAN</name>
<keyword id="KW-0025">Alternative splicing</keyword>
<keyword id="KW-0067">ATP-binding</keyword>
<keyword id="KW-0418">Kinase</keyword>
<keyword id="KW-0547">Nucleotide-binding</keyword>
<keyword id="KW-0597">Phosphoprotein</keyword>
<keyword id="KW-1267">Proteomics identification</keyword>
<keyword id="KW-1185">Reference proteome</keyword>
<keyword id="KW-0723">Serine/threonine-protein kinase</keyword>
<keyword id="KW-0808">Transferase</keyword>
<dbReference type="EC" id="2.7.11.22"/>
<dbReference type="EMBL" id="AY353237">
    <property type="protein sequence ID" value="AAR13065.1"/>
    <property type="molecule type" value="mRNA"/>
</dbReference>
<dbReference type="EMBL" id="AY353238">
    <property type="protein sequence ID" value="AAR13066.1"/>
    <property type="molecule type" value="mRNA"/>
</dbReference>
<dbReference type="EMBL" id="BT007299">
    <property type="protein sequence ID" value="AAP35963.1"/>
    <property type="molecule type" value="mRNA"/>
</dbReference>
<dbReference type="EMBL" id="AL357131">
    <property type="status" value="NOT_ANNOTATED_CDS"/>
    <property type="molecule type" value="Genomic_DNA"/>
</dbReference>
<dbReference type="EMBL" id="CH471067">
    <property type="protein sequence ID" value="EAW91559.1"/>
    <property type="molecule type" value="Genomic_DNA"/>
</dbReference>
<dbReference type="EMBL" id="CH471067">
    <property type="protein sequence ID" value="EAW91560.1"/>
    <property type="molecule type" value="Genomic_DNA"/>
</dbReference>
<dbReference type="EMBL" id="BC011526">
    <property type="protein sequence ID" value="AAH11526.1"/>
    <property type="molecule type" value="mRNA"/>
</dbReference>
<dbReference type="EMBL" id="X66362">
    <property type="protein sequence ID" value="CAA47005.1"/>
    <property type="molecule type" value="mRNA"/>
</dbReference>
<dbReference type="CCDS" id="CCDS1454.1">
    <molecule id="Q07002-3"/>
</dbReference>
<dbReference type="CCDS" id="CCDS44300.1">
    <molecule id="Q07002-2"/>
</dbReference>
<dbReference type="PIR" id="S32831">
    <property type="entry name" value="S32831"/>
</dbReference>
<dbReference type="RefSeq" id="NP_002587.2">
    <molecule id="Q07002-2"/>
    <property type="nucleotide sequence ID" value="NM_002596.3"/>
</dbReference>
<dbReference type="RefSeq" id="NP_997667.1">
    <molecule id="Q07002-2"/>
    <property type="nucleotide sequence ID" value="NM_212502.3"/>
</dbReference>
<dbReference type="RefSeq" id="NP_997668.1">
    <molecule id="Q07002-3"/>
    <property type="nucleotide sequence ID" value="NM_212503.3"/>
</dbReference>
<dbReference type="RefSeq" id="XP_011507904.2">
    <molecule id="Q07002-2"/>
    <property type="nucleotide sequence ID" value="XM_011509602.4"/>
</dbReference>
<dbReference type="RefSeq" id="XP_016856912.2">
    <molecule id="Q07002-3"/>
    <property type="nucleotide sequence ID" value="XM_017001423.3"/>
</dbReference>
<dbReference type="SMR" id="Q07002"/>
<dbReference type="BioGRID" id="111156">
    <property type="interactions" value="136"/>
</dbReference>
<dbReference type="FunCoup" id="Q07002">
    <property type="interactions" value="672"/>
</dbReference>
<dbReference type="IntAct" id="Q07002">
    <property type="interactions" value="122"/>
</dbReference>
<dbReference type="MINT" id="Q07002"/>
<dbReference type="STRING" id="9606.ENSP00000423665"/>
<dbReference type="BindingDB" id="Q07002"/>
<dbReference type="ChEMBL" id="CHEMBL5316"/>
<dbReference type="DrugCentral" id="Q07002"/>
<dbReference type="GlyGen" id="Q07002">
    <property type="glycosylation" value="1 site, 1 O-linked glycan (1 site)"/>
</dbReference>
<dbReference type="iPTMnet" id="Q07002"/>
<dbReference type="PhosphoSitePlus" id="Q07002"/>
<dbReference type="SwissPalm" id="Q07002"/>
<dbReference type="BioMuta" id="CDK18"/>
<dbReference type="DMDM" id="116242704"/>
<dbReference type="CPTAC" id="non-CPTAC-2857"/>
<dbReference type="CPTAC" id="non-CPTAC-2858"/>
<dbReference type="CPTAC" id="non-CPTAC-5665"/>
<dbReference type="jPOST" id="Q07002"/>
<dbReference type="MassIVE" id="Q07002"/>
<dbReference type="PaxDb" id="9606-ENSP00000423665"/>
<dbReference type="PeptideAtlas" id="Q07002"/>
<dbReference type="ProteomicsDB" id="58496">
    <molecule id="Q07002-2"/>
</dbReference>
<dbReference type="ProteomicsDB" id="58497">
    <molecule id="Q07002-3"/>
</dbReference>
<dbReference type="Pumba" id="Q07002"/>
<dbReference type="Antibodypedia" id="34567">
    <property type="antibodies" value="187 antibodies from 27 providers"/>
</dbReference>
<dbReference type="DNASU" id="5129"/>
<dbReference type="Ensembl" id="ENST00000360066.6">
    <molecule id="Q07002-2"/>
    <property type="protein sequence ID" value="ENSP00000353176.2"/>
    <property type="gene ID" value="ENSG00000117266.16"/>
</dbReference>
<dbReference type="Ensembl" id="ENST00000429964.7">
    <molecule id="Q07002-2"/>
    <property type="protein sequence ID" value="ENSP00000399082.2"/>
    <property type="gene ID" value="ENSG00000117266.16"/>
</dbReference>
<dbReference type="Ensembl" id="ENST00000506784.5">
    <molecule id="Q07002-3"/>
    <property type="protein sequence ID" value="ENSP00000423665.1"/>
    <property type="gene ID" value="ENSG00000117266.16"/>
</dbReference>
<dbReference type="GeneID" id="5129"/>
<dbReference type="KEGG" id="hsa:5129"/>
<dbReference type="MANE-Select" id="ENST00000429964.7">
    <property type="protein sequence ID" value="ENSP00000399082.2"/>
    <property type="RefSeq nucleotide sequence ID" value="NM_212502.3"/>
    <property type="RefSeq protein sequence ID" value="NP_997667.1"/>
</dbReference>
<dbReference type="UCSC" id="uc001hcp.4">
    <molecule id="Q07002-2"/>
    <property type="organism name" value="human"/>
</dbReference>
<dbReference type="AGR" id="HGNC:8751"/>
<dbReference type="CTD" id="5129"/>
<dbReference type="DisGeNET" id="5129"/>
<dbReference type="GeneCards" id="CDK18"/>
<dbReference type="HGNC" id="HGNC:8751">
    <property type="gene designation" value="CDK18"/>
</dbReference>
<dbReference type="HPA" id="ENSG00000117266">
    <property type="expression patterns" value="Group enriched (brain, heart muscle)"/>
</dbReference>
<dbReference type="MIM" id="169190">
    <property type="type" value="gene"/>
</dbReference>
<dbReference type="neXtProt" id="NX_Q07002"/>
<dbReference type="OpenTargets" id="ENSG00000117266"/>
<dbReference type="PharmGKB" id="PA33097"/>
<dbReference type="VEuPathDB" id="HostDB:ENSG00000117266"/>
<dbReference type="eggNOG" id="KOG0594">
    <property type="taxonomic scope" value="Eukaryota"/>
</dbReference>
<dbReference type="GeneTree" id="ENSGT00940000159482"/>
<dbReference type="HOGENOM" id="CLU_000288_154_3_1"/>
<dbReference type="InParanoid" id="Q07002"/>
<dbReference type="OMA" id="PTSVHYR"/>
<dbReference type="OrthoDB" id="1732493at2759"/>
<dbReference type="PAN-GO" id="Q07002">
    <property type="GO annotations" value="4 GO annotations based on evolutionary models"/>
</dbReference>
<dbReference type="PhylomeDB" id="Q07002"/>
<dbReference type="TreeFam" id="TF106508"/>
<dbReference type="BRENDA" id="2.7.11.22">
    <property type="organism ID" value="2681"/>
</dbReference>
<dbReference type="PathwayCommons" id="Q07002"/>
<dbReference type="SignaLink" id="Q07002"/>
<dbReference type="SIGNOR" id="Q07002"/>
<dbReference type="BioGRID-ORCS" id="5129">
    <property type="hits" value="10 hits in 1181 CRISPR screens"/>
</dbReference>
<dbReference type="CD-CODE" id="FB4E32DD">
    <property type="entry name" value="Presynaptic clusters and postsynaptic densities"/>
</dbReference>
<dbReference type="ChiTaRS" id="CDK18">
    <property type="organism name" value="human"/>
</dbReference>
<dbReference type="GeneWiki" id="PCTK3"/>
<dbReference type="GenomeRNAi" id="5129"/>
<dbReference type="Pharos" id="Q07002">
    <property type="development level" value="Tchem"/>
</dbReference>
<dbReference type="PRO" id="PR:Q07002"/>
<dbReference type="Proteomes" id="UP000005640">
    <property type="component" value="Chromosome 1"/>
</dbReference>
<dbReference type="RNAct" id="Q07002">
    <property type="molecule type" value="protein"/>
</dbReference>
<dbReference type="Bgee" id="ENSG00000117266">
    <property type="expression patterns" value="Expressed in C1 segment of cervical spinal cord and 145 other cell types or tissues"/>
</dbReference>
<dbReference type="ExpressionAtlas" id="Q07002">
    <property type="expression patterns" value="baseline and differential"/>
</dbReference>
<dbReference type="GO" id="GO:0005737">
    <property type="term" value="C:cytoplasm"/>
    <property type="evidence" value="ECO:0000318"/>
    <property type="project" value="GO_Central"/>
</dbReference>
<dbReference type="GO" id="GO:0005739">
    <property type="term" value="C:mitochondrion"/>
    <property type="evidence" value="ECO:0006056"/>
    <property type="project" value="FlyBase"/>
</dbReference>
<dbReference type="GO" id="GO:0005634">
    <property type="term" value="C:nucleus"/>
    <property type="evidence" value="ECO:0000318"/>
    <property type="project" value="GO_Central"/>
</dbReference>
<dbReference type="GO" id="GO:0005524">
    <property type="term" value="F:ATP binding"/>
    <property type="evidence" value="ECO:0007669"/>
    <property type="project" value="UniProtKB-KW"/>
</dbReference>
<dbReference type="GO" id="GO:0004693">
    <property type="term" value="F:cyclin-dependent protein serine/threonine kinase activity"/>
    <property type="evidence" value="ECO:0000318"/>
    <property type="project" value="GO_Central"/>
</dbReference>
<dbReference type="GO" id="GO:0106310">
    <property type="term" value="F:protein serine kinase activity"/>
    <property type="evidence" value="ECO:0007669"/>
    <property type="project" value="RHEA"/>
</dbReference>
<dbReference type="GO" id="GO:0031643">
    <property type="term" value="P:positive regulation of myelination"/>
    <property type="evidence" value="ECO:0000314"/>
    <property type="project" value="GO_Central"/>
</dbReference>
<dbReference type="GO" id="GO:1901987">
    <property type="term" value="P:regulation of cell cycle phase transition"/>
    <property type="evidence" value="ECO:0000318"/>
    <property type="project" value="GO_Central"/>
</dbReference>
<dbReference type="CDD" id="cd07871">
    <property type="entry name" value="STKc_PCTAIRE3"/>
    <property type="match status" value="1"/>
</dbReference>
<dbReference type="FunFam" id="3.30.200.20:FF:000007">
    <property type="entry name" value="Cyclin-dependent kinase 14, putative"/>
    <property type="match status" value="1"/>
</dbReference>
<dbReference type="FunFam" id="1.10.510.10:FF:000061">
    <property type="entry name" value="Putative cyclin-dependent kinase 17"/>
    <property type="match status" value="1"/>
</dbReference>
<dbReference type="Gene3D" id="3.30.200.20">
    <property type="entry name" value="Phosphorylase Kinase, domain 1"/>
    <property type="match status" value="1"/>
</dbReference>
<dbReference type="Gene3D" id="1.10.510.10">
    <property type="entry name" value="Transferase(Phosphotransferase) domain 1"/>
    <property type="match status" value="1"/>
</dbReference>
<dbReference type="InterPro" id="IPR050108">
    <property type="entry name" value="CDK"/>
</dbReference>
<dbReference type="InterPro" id="IPR011009">
    <property type="entry name" value="Kinase-like_dom_sf"/>
</dbReference>
<dbReference type="InterPro" id="IPR000719">
    <property type="entry name" value="Prot_kinase_dom"/>
</dbReference>
<dbReference type="InterPro" id="IPR017441">
    <property type="entry name" value="Protein_kinase_ATP_BS"/>
</dbReference>
<dbReference type="InterPro" id="IPR008271">
    <property type="entry name" value="Ser/Thr_kinase_AS"/>
</dbReference>
<dbReference type="PANTHER" id="PTHR24056">
    <property type="entry name" value="CELL DIVISION PROTEIN KINASE"/>
    <property type="match status" value="1"/>
</dbReference>
<dbReference type="PANTHER" id="PTHR24056:SF52">
    <property type="entry name" value="CYCLIN-DEPENDENT KINASE 18"/>
    <property type="match status" value="1"/>
</dbReference>
<dbReference type="Pfam" id="PF00069">
    <property type="entry name" value="Pkinase"/>
    <property type="match status" value="1"/>
</dbReference>
<dbReference type="SMART" id="SM00220">
    <property type="entry name" value="S_TKc"/>
    <property type="match status" value="1"/>
</dbReference>
<dbReference type="SUPFAM" id="SSF56112">
    <property type="entry name" value="Protein kinase-like (PK-like)"/>
    <property type="match status" value="1"/>
</dbReference>
<dbReference type="PROSITE" id="PS00107">
    <property type="entry name" value="PROTEIN_KINASE_ATP"/>
    <property type="match status" value="1"/>
</dbReference>
<dbReference type="PROSITE" id="PS50011">
    <property type="entry name" value="PROTEIN_KINASE_DOM"/>
    <property type="match status" value="1"/>
</dbReference>
<dbReference type="PROSITE" id="PS00108">
    <property type="entry name" value="PROTEIN_KINASE_ST"/>
    <property type="match status" value="1"/>
</dbReference>
<accession>Q07002</accession>
<accession>Q5VXQ2</accession>
<accession>Q6V3A2</accession>
<accession>Q6V3A3</accession>
<accession>Q96F90</accession>
<proteinExistence type="evidence at protein level"/>
<feature type="chain" id="PRO_0000086490" description="Cyclin-dependent kinase 18">
    <location>
        <begin position="1"/>
        <end position="474"/>
    </location>
</feature>
<feature type="domain" description="Protein kinase" evidence="2">
    <location>
        <begin position="144"/>
        <end position="425"/>
    </location>
</feature>
<feature type="region of interest" description="Disordered" evidence="4">
    <location>
        <begin position="44"/>
        <end position="93"/>
    </location>
</feature>
<feature type="active site" description="Proton acceptor" evidence="2 3">
    <location>
        <position position="265"/>
    </location>
</feature>
<feature type="binding site" evidence="2">
    <location>
        <begin position="150"/>
        <end position="158"/>
    </location>
    <ligand>
        <name>ATP</name>
        <dbReference type="ChEBI" id="CHEBI:30616"/>
    </ligand>
</feature>
<feature type="binding site" evidence="2">
    <location>
        <position position="173"/>
    </location>
    <ligand>
        <name>ATP</name>
        <dbReference type="ChEBI" id="CHEBI:30616"/>
    </ligand>
</feature>
<feature type="modified residue" description="Phosphoserine" evidence="11">
    <location>
        <position position="14"/>
    </location>
</feature>
<feature type="modified residue" description="Phosphoserine" evidence="12 13">
    <location>
        <position position="74"/>
    </location>
</feature>
<feature type="modified residue" description="Phosphoserine" evidence="11 12 13 16">
    <location>
        <position position="89"/>
    </location>
</feature>
<feature type="modified residue" description="Phosphoserine" evidence="13">
    <location>
        <position position="98"/>
    </location>
</feature>
<feature type="modified residue" description="Phosphoserine" evidence="12 13">
    <location>
        <position position="117"/>
    </location>
</feature>
<feature type="modified residue" description="Phosphoserine" evidence="11 14 15">
    <location>
        <position position="132"/>
    </location>
</feature>
<feature type="modified residue" description="Phosphoserine" evidence="1">
    <location>
        <position position="440"/>
    </location>
</feature>
<feature type="modified residue" description="Phosphoserine" evidence="1">
    <location>
        <position position="443"/>
    </location>
</feature>
<feature type="splice variant" id="VSP_035889" description="In isoform 2." evidence="9">
    <original>E</original>
    <variation>EVRASGALPRQVAGCTHKGVHRRAAALQPDF</variation>
    <location>
        <position position="91"/>
    </location>
</feature>
<feature type="sequence variant" id="VAR_047802" description="In dbSNP:rs35134237." evidence="7">
    <original>G</original>
    <variation>S</variation>
    <location>
        <position position="48"/>
    </location>
</feature>
<feature type="sequence variant" id="VAR_047803" description="In dbSNP:rs4623769." evidence="7">
    <original>G</original>
    <variation>R</variation>
    <location>
        <position position="67"/>
    </location>
</feature>
<feature type="sequence variant" id="VAR_047804" description="In dbSNP:rs17850752." evidence="6 7 8">
    <original>T</original>
    <variation>M</variation>
    <location>
        <position position="166"/>
    </location>
</feature>
<feature type="sequence conflict" description="In Ref. 6; CAA47005." evidence="10" ref="6">
    <original>H</original>
    <variation>T</variation>
    <location>
        <position position="258"/>
    </location>
</feature>
<feature type="sequence conflict" description="In Ref. 6; CAA47005." evidence="10" ref="6">
    <original>D</original>
    <variation>A</variation>
    <location>
        <position position="323"/>
    </location>
</feature>
<feature type="sequence conflict" description="In Ref. 6; CAA47005." evidence="10" ref="6">
    <original>L</original>
    <variation>V</variation>
    <location>
        <position position="407"/>
    </location>
</feature>
<protein>
    <recommendedName>
        <fullName>Cyclin-dependent kinase 18</fullName>
        <ecNumber>2.7.11.22</ecNumber>
    </recommendedName>
    <alternativeName>
        <fullName>Cell division protein kinase 18</fullName>
    </alternativeName>
    <alternativeName>
        <fullName>PCTAIRE-motif protein kinase 3</fullName>
    </alternativeName>
    <alternativeName>
        <fullName>Serine/threonine-protein kinase PCTAIRE-3</fullName>
    </alternativeName>
</protein>
<organism>
    <name type="scientific">Homo sapiens</name>
    <name type="common">Human</name>
    <dbReference type="NCBI Taxonomy" id="9606"/>
    <lineage>
        <taxon>Eukaryota</taxon>
        <taxon>Metazoa</taxon>
        <taxon>Chordata</taxon>
        <taxon>Craniata</taxon>
        <taxon>Vertebrata</taxon>
        <taxon>Euteleostomi</taxon>
        <taxon>Mammalia</taxon>
        <taxon>Eutheria</taxon>
        <taxon>Euarchontoglires</taxon>
        <taxon>Primates</taxon>
        <taxon>Haplorrhini</taxon>
        <taxon>Catarrhini</taxon>
        <taxon>Hominidae</taxon>
        <taxon>Homo</taxon>
    </lineage>
</organism>